<name>KLC1_RAT</name>
<accession>P37285</accession>
<dbReference type="EMBL" id="M75146">
    <property type="status" value="NOT_ANNOTATED_CDS"/>
    <property type="molecule type" value="mRNA"/>
</dbReference>
<dbReference type="EMBL" id="M75147">
    <property type="status" value="NOT_ANNOTATED_CDS"/>
    <property type="molecule type" value="mRNA"/>
</dbReference>
<dbReference type="EMBL" id="M75148">
    <property type="status" value="NOT_ANNOTATED_CDS"/>
    <property type="molecule type" value="mRNA"/>
</dbReference>
<dbReference type="RefSeq" id="NP_001075441.2">
    <molecule id="P37285-2"/>
    <property type="nucleotide sequence ID" value="NM_001081972.2"/>
</dbReference>
<dbReference type="RefSeq" id="NP_001075442.1">
    <molecule id="P37285-3"/>
    <property type="nucleotide sequence ID" value="NM_001081973.2"/>
</dbReference>
<dbReference type="RefSeq" id="NP_001075443.1">
    <molecule id="P37285-1"/>
    <property type="nucleotide sequence ID" value="NM_001081974.2"/>
</dbReference>
<dbReference type="RefSeq" id="XP_038967665.1">
    <molecule id="P37285-1"/>
    <property type="nucleotide sequence ID" value="XM_039111737.2"/>
</dbReference>
<dbReference type="RefSeq" id="XP_038967667.1">
    <molecule id="P37285-3"/>
    <property type="nucleotide sequence ID" value="XM_039111739.2"/>
</dbReference>
<dbReference type="SMR" id="P37285"/>
<dbReference type="BioGRID" id="251058">
    <property type="interactions" value="9"/>
</dbReference>
<dbReference type="CORUM" id="P37285"/>
<dbReference type="DIP" id="DIP-36927N"/>
<dbReference type="ELM" id="P37285"/>
<dbReference type="FunCoup" id="P37285">
    <property type="interactions" value="2254"/>
</dbReference>
<dbReference type="IntAct" id="P37285">
    <property type="interactions" value="4"/>
</dbReference>
<dbReference type="MINT" id="P37285"/>
<dbReference type="STRING" id="10116.ENSRNOP00000060469"/>
<dbReference type="ChEMBL" id="CHEMBL2176819"/>
<dbReference type="iPTMnet" id="P37285"/>
<dbReference type="PhosphoSitePlus" id="P37285"/>
<dbReference type="SwissPalm" id="P37285"/>
<dbReference type="jPOST" id="P37285"/>
<dbReference type="PaxDb" id="10116-ENSRNOP00000015935"/>
<dbReference type="Ensembl" id="ENSRNOT00000015935.9">
    <molecule id="P37285-3"/>
    <property type="protein sequence ID" value="ENSRNOP00000015935.8"/>
    <property type="gene ID" value="ENSRNOG00000011572.10"/>
</dbReference>
<dbReference type="Ensembl" id="ENSRNOT00000092774.2">
    <molecule id="P37285-1"/>
    <property type="protein sequence ID" value="ENSRNOP00000075931.1"/>
    <property type="gene ID" value="ENSRNOG00000011572.10"/>
</dbReference>
<dbReference type="GeneID" id="171041"/>
<dbReference type="KEGG" id="rno:171041"/>
<dbReference type="UCSC" id="RGD:621411">
    <molecule id="P37285-1"/>
    <property type="organism name" value="rat"/>
</dbReference>
<dbReference type="AGR" id="RGD:621411"/>
<dbReference type="CTD" id="3831"/>
<dbReference type="RGD" id="621411">
    <property type="gene designation" value="Klc1"/>
</dbReference>
<dbReference type="eggNOG" id="KOG1840">
    <property type="taxonomic scope" value="Eukaryota"/>
</dbReference>
<dbReference type="GeneTree" id="ENSGT00940000155555"/>
<dbReference type="InParanoid" id="P37285"/>
<dbReference type="PhylomeDB" id="P37285"/>
<dbReference type="Reactome" id="R-RNO-2132295">
    <property type="pathway name" value="MHC class II antigen presentation"/>
</dbReference>
<dbReference type="Reactome" id="R-RNO-5625970">
    <property type="pathway name" value="RHO GTPases activate KTN1"/>
</dbReference>
<dbReference type="Reactome" id="R-RNO-6811434">
    <property type="pathway name" value="COPI-dependent Golgi-to-ER retrograde traffic"/>
</dbReference>
<dbReference type="Reactome" id="R-RNO-983189">
    <property type="pathway name" value="Kinesins"/>
</dbReference>
<dbReference type="PRO" id="PR:P37285"/>
<dbReference type="Proteomes" id="UP000002494">
    <property type="component" value="Chromosome 6"/>
</dbReference>
<dbReference type="Bgee" id="ENSRNOG00000011572">
    <property type="expression patterns" value="Expressed in cerebellum and 20 other cell types or tissues"/>
</dbReference>
<dbReference type="ExpressionAtlas" id="P37285">
    <property type="expression patterns" value="baseline and differential"/>
</dbReference>
<dbReference type="GO" id="GO:0030424">
    <property type="term" value="C:axon"/>
    <property type="evidence" value="ECO:0000314"/>
    <property type="project" value="RGD"/>
</dbReference>
<dbReference type="GO" id="GO:0035253">
    <property type="term" value="C:ciliary rootlet"/>
    <property type="evidence" value="ECO:0000266"/>
    <property type="project" value="RGD"/>
</dbReference>
<dbReference type="GO" id="GO:0005737">
    <property type="term" value="C:cytoplasm"/>
    <property type="evidence" value="ECO:0000266"/>
    <property type="project" value="RGD"/>
</dbReference>
<dbReference type="GO" id="GO:0031410">
    <property type="term" value="C:cytoplasmic vesicle"/>
    <property type="evidence" value="ECO:0000266"/>
    <property type="project" value="RGD"/>
</dbReference>
<dbReference type="GO" id="GO:0005829">
    <property type="term" value="C:cytosol"/>
    <property type="evidence" value="ECO:0000266"/>
    <property type="project" value="RGD"/>
</dbReference>
<dbReference type="GO" id="GO:0030426">
    <property type="term" value="C:growth cone"/>
    <property type="evidence" value="ECO:0000314"/>
    <property type="project" value="UniProtKB"/>
</dbReference>
<dbReference type="GO" id="GO:0005871">
    <property type="term" value="C:kinesin complex"/>
    <property type="evidence" value="ECO:0000314"/>
    <property type="project" value="RGD"/>
</dbReference>
<dbReference type="GO" id="GO:0016020">
    <property type="term" value="C:membrane"/>
    <property type="evidence" value="ECO:0000314"/>
    <property type="project" value="BHF-UCL"/>
</dbReference>
<dbReference type="GO" id="GO:0005874">
    <property type="term" value="C:microtubule"/>
    <property type="evidence" value="ECO:0007669"/>
    <property type="project" value="UniProtKB-KW"/>
</dbReference>
<dbReference type="GO" id="GO:0043005">
    <property type="term" value="C:neuron projection"/>
    <property type="evidence" value="ECO:0000266"/>
    <property type="project" value="RGD"/>
</dbReference>
<dbReference type="GO" id="GO:0043025">
    <property type="term" value="C:neuronal cell body"/>
    <property type="evidence" value="ECO:0000314"/>
    <property type="project" value="RGD"/>
</dbReference>
<dbReference type="GO" id="GO:0031982">
    <property type="term" value="C:vesicle"/>
    <property type="evidence" value="ECO:0000314"/>
    <property type="project" value="RGD"/>
</dbReference>
<dbReference type="GO" id="GO:0019894">
    <property type="term" value="F:kinesin binding"/>
    <property type="evidence" value="ECO:0000318"/>
    <property type="project" value="GO_Central"/>
</dbReference>
<dbReference type="GO" id="GO:0015631">
    <property type="term" value="F:tubulin binding"/>
    <property type="evidence" value="ECO:0000314"/>
    <property type="project" value="RGD"/>
</dbReference>
<dbReference type="GO" id="GO:0008088">
    <property type="term" value="P:axo-dendritic transport"/>
    <property type="evidence" value="ECO:0000266"/>
    <property type="project" value="RGD"/>
</dbReference>
<dbReference type="GO" id="GO:0007155">
    <property type="term" value="P:cell adhesion"/>
    <property type="evidence" value="ECO:0007669"/>
    <property type="project" value="UniProtKB-KW"/>
</dbReference>
<dbReference type="GO" id="GO:0006886">
    <property type="term" value="P:intracellular protein transport"/>
    <property type="evidence" value="ECO:0000315"/>
    <property type="project" value="RGD"/>
</dbReference>
<dbReference type="GO" id="GO:0007018">
    <property type="term" value="P:microtubule-based movement"/>
    <property type="evidence" value="ECO:0000318"/>
    <property type="project" value="GO_Central"/>
</dbReference>
<dbReference type="GO" id="GO:0035418">
    <property type="term" value="P:protein localization to synapse"/>
    <property type="evidence" value="ECO:0000315"/>
    <property type="project" value="UniProtKB"/>
</dbReference>
<dbReference type="GO" id="GO:0035617">
    <property type="term" value="P:stress granule disassembly"/>
    <property type="evidence" value="ECO:0000266"/>
    <property type="project" value="RGD"/>
</dbReference>
<dbReference type="FunFam" id="1.25.40.10:FF:000003">
    <property type="entry name" value="kinesin light chain isoform X1"/>
    <property type="match status" value="1"/>
</dbReference>
<dbReference type="Gene3D" id="1.25.40.10">
    <property type="entry name" value="Tetratricopeptide repeat domain"/>
    <property type="match status" value="1"/>
</dbReference>
<dbReference type="InterPro" id="IPR002151">
    <property type="entry name" value="Kinesin_light"/>
</dbReference>
<dbReference type="InterPro" id="IPR015792">
    <property type="entry name" value="Kinesin_light_repeat"/>
</dbReference>
<dbReference type="InterPro" id="IPR011990">
    <property type="entry name" value="TPR-like_helical_dom_sf"/>
</dbReference>
<dbReference type="InterPro" id="IPR019734">
    <property type="entry name" value="TPR_rpt"/>
</dbReference>
<dbReference type="PANTHER" id="PTHR45783">
    <property type="entry name" value="KINESIN LIGHT CHAIN"/>
    <property type="match status" value="1"/>
</dbReference>
<dbReference type="PANTHER" id="PTHR45783:SF7">
    <property type="entry name" value="KINESIN LIGHT CHAIN 1"/>
    <property type="match status" value="1"/>
</dbReference>
<dbReference type="Pfam" id="PF13374">
    <property type="entry name" value="TPR_10"/>
    <property type="match status" value="2"/>
</dbReference>
<dbReference type="Pfam" id="PF13424">
    <property type="entry name" value="TPR_12"/>
    <property type="match status" value="2"/>
</dbReference>
<dbReference type="PRINTS" id="PR00381">
    <property type="entry name" value="KINESINLIGHT"/>
</dbReference>
<dbReference type="SMART" id="SM00028">
    <property type="entry name" value="TPR"/>
    <property type="match status" value="5"/>
</dbReference>
<dbReference type="SUPFAM" id="SSF48452">
    <property type="entry name" value="TPR-like"/>
    <property type="match status" value="2"/>
</dbReference>
<dbReference type="PROSITE" id="PS01160">
    <property type="entry name" value="KINESIN_LIGHT"/>
    <property type="match status" value="4"/>
</dbReference>
<dbReference type="PROSITE" id="PS50005">
    <property type="entry name" value="TPR"/>
    <property type="match status" value="6"/>
</dbReference>
<dbReference type="PROSITE" id="PS50293">
    <property type="entry name" value="TPR_REGION"/>
    <property type="match status" value="2"/>
</dbReference>
<evidence type="ECO:0000250" key="1">
    <source>
        <dbReference type="UniProtKB" id="O88447"/>
    </source>
</evidence>
<evidence type="ECO:0000250" key="2">
    <source>
        <dbReference type="UniProtKB" id="Q07866"/>
    </source>
</evidence>
<evidence type="ECO:0000256" key="3">
    <source>
        <dbReference type="SAM" id="MobiDB-lite"/>
    </source>
</evidence>
<evidence type="ECO:0000269" key="4">
    <source>
    </source>
</evidence>
<evidence type="ECO:0000269" key="5">
    <source>
    </source>
</evidence>
<evidence type="ECO:0000269" key="6">
    <source>
    </source>
</evidence>
<evidence type="ECO:0000303" key="7">
    <source>
    </source>
</evidence>
<evidence type="ECO:0000305" key="8"/>
<evidence type="ECO:0000305" key="9">
    <source>
    </source>
</evidence>
<evidence type="ECO:0007744" key="10">
    <source>
    </source>
</evidence>
<keyword id="KW-0025">Alternative splicing</keyword>
<keyword id="KW-0106">Calcium</keyword>
<keyword id="KW-0130">Cell adhesion</keyword>
<keyword id="KW-0966">Cell projection</keyword>
<keyword id="KW-0175">Coiled coil</keyword>
<keyword id="KW-0963">Cytoplasm</keyword>
<keyword id="KW-0968">Cytoplasmic vesicle</keyword>
<keyword id="KW-0206">Cytoskeleton</keyword>
<keyword id="KW-0493">Microtubule</keyword>
<keyword id="KW-0505">Motor protein</keyword>
<keyword id="KW-0597">Phosphoprotein</keyword>
<keyword id="KW-1185">Reference proteome</keyword>
<keyword id="KW-0677">Repeat</keyword>
<keyword id="KW-0802">TPR repeat</keyword>
<feature type="chain" id="PRO_0000215094" description="Kinesin light chain 1">
    <location>
        <begin position="1"/>
        <end position="560"/>
    </location>
</feature>
<feature type="repeat" description="TPR 1">
    <location>
        <begin position="213"/>
        <end position="246"/>
    </location>
</feature>
<feature type="repeat" description="TPR 2">
    <location>
        <begin position="255"/>
        <end position="288"/>
    </location>
</feature>
<feature type="repeat" description="TPR 3">
    <location>
        <begin position="297"/>
        <end position="330"/>
    </location>
</feature>
<feature type="repeat" description="TPR 4">
    <location>
        <begin position="339"/>
        <end position="372"/>
    </location>
</feature>
<feature type="repeat" description="TPR 5">
    <location>
        <begin position="381"/>
        <end position="414"/>
    </location>
</feature>
<feature type="repeat" description="TPR 6">
    <location>
        <begin position="464"/>
        <end position="497"/>
    </location>
</feature>
<feature type="region of interest" description="Disordered" evidence="3">
    <location>
        <begin position="156"/>
        <end position="203"/>
    </location>
</feature>
<feature type="coiled-coil region">
    <location>
        <begin position="27"/>
        <end position="156"/>
    </location>
</feature>
<feature type="compositionally biased region" description="Basic and acidic residues" evidence="3">
    <location>
        <begin position="156"/>
        <end position="176"/>
    </location>
</feature>
<feature type="compositionally biased region" description="Low complexity" evidence="3">
    <location>
        <begin position="188"/>
        <end position="203"/>
    </location>
</feature>
<feature type="modified residue" description="Phosphoserine" evidence="10">
    <location>
        <position position="162"/>
    </location>
</feature>
<feature type="modified residue" description="Phosphotyrosine" evidence="1">
    <location>
        <position position="449"/>
    </location>
</feature>
<feature type="modified residue" description="Phosphoserine" evidence="1">
    <location>
        <position position="460"/>
    </location>
</feature>
<feature type="modified residue" description="Phosphoserine" evidence="10">
    <location>
        <position position="521"/>
    </location>
</feature>
<feature type="modified residue" description="Phosphoserine" evidence="10">
    <location>
        <position position="524"/>
    </location>
</feature>
<feature type="splice variant" id="VSP_002872" description="In isoform A." evidence="7">
    <original>VSMSVEWNGMRKMKLGLVK</original>
    <variation>A</variation>
    <location>
        <begin position="542"/>
        <end position="560"/>
    </location>
</feature>
<feature type="splice variant" id="VSP_002871" description="In isoform B." evidence="7">
    <location>
        <begin position="542"/>
        <end position="550"/>
    </location>
</feature>
<gene>
    <name type="primary">Klc1</name>
    <name type="synonym">Klc</name>
    <name type="synonym">Kns2</name>
</gene>
<proteinExistence type="evidence at protein level"/>
<sequence>MHDNMSTMVYMKEEKLEKLTQDEIISKTKQVIQGLEALKNEHNSILQSLLETLKCLKKDDESNLVEEKSSMIRKSLEMLELGLSEAQVMMALSNHLNAVESEKQKLRAQVRRLCQENQWLRDELANTQQKLQKSEQSVAQLEEEKKHLEFMNQLKKYDDDISPSEDKDSDSSKEPLDDLFPNDEDDPGQGIQQQHSSAAAAAQQGGYEIPARLRTLHNLVIQYASQGRYEVAVPLCKQALEDLEKTSGHDHPDVATMLNILALVYRDQNKYKDAANLLNDALAIREKTLGRDHPAVAATLNNLAVLYGKRGKYKEAEPLCKRALEIREKVLGKDHPDVAKQLNNLALLCQNQGKYEEVEYYYQRALEIYQTKLGPDDPNVAKTKNNLASCYLKQGKFKQAETLYKEILTRAHEREFGSVDDENKPIWMHAEEREECKGKQKDGSSFGEYGGWYKACKVDSPTVTTTLKNLGALYRRQGKFEAAETLEEAALRSRKQGLDNVHKQRVAEVLNDPENVEKRRSRESLNVDVVKYESGPDGGEEVSMSVEWNGMRKMKLGLVK</sequence>
<organism>
    <name type="scientific">Rattus norvegicus</name>
    <name type="common">Rat</name>
    <dbReference type="NCBI Taxonomy" id="10116"/>
    <lineage>
        <taxon>Eukaryota</taxon>
        <taxon>Metazoa</taxon>
        <taxon>Chordata</taxon>
        <taxon>Craniata</taxon>
        <taxon>Vertebrata</taxon>
        <taxon>Euteleostomi</taxon>
        <taxon>Mammalia</taxon>
        <taxon>Eutheria</taxon>
        <taxon>Euarchontoglires</taxon>
        <taxon>Glires</taxon>
        <taxon>Rodentia</taxon>
        <taxon>Myomorpha</taxon>
        <taxon>Muroidea</taxon>
        <taxon>Muridae</taxon>
        <taxon>Murinae</taxon>
        <taxon>Rattus</taxon>
    </lineage>
</organism>
<comment type="function">
    <text evidence="5">Kinesin is a microtubule-associated force-producing protein that may play a role in organelle transport (PubMed:19861499). The light chain may function in coupling of cargo to the heavy chain or in the modulation of its ATPase activity (PubMed:19861499).</text>
</comment>
<comment type="subunit">
    <text evidence="2 4 5 6 8">Oligomeric complex composed of two heavy chains and two light chains (Probable). Interacts with SPAG9 (By similarity). Interacts with ATCAY; may link mitochondria to KLC1 and regulate mitochondria localization into neuron projections (PubMed:19861499). Interacts (via TPR repeats) with TOR1A; the interaction associates TOR1A with the kinesin oligomeric complex (PubMed:14970196). Interacts with BORCS5 (By similarity). Interacts with MAPK8IP3/JIP3 and NTRK2/TRKB; interaction with NTRK2/TRKB is mediated by MAPK8IP3/JIP3 (PubMed:21775604). Interacts with CLSTN1; phosphorylation at Ser-460 inhibits interaction with CLSTN1 (By similarity).</text>
</comment>
<comment type="interaction">
    <interactant intactId="EBI-917396">
        <id>P37285</id>
    </interactant>
    <interactant intactId="EBI-7133540">
        <id>P68619</id>
        <label>OPG164</label>
    </interactant>
    <organismsDiffer>true</organismsDiffer>
    <experiments>4</experiments>
</comment>
<comment type="subcellular location">
    <subcellularLocation>
        <location evidence="4">Cell projection</location>
        <location evidence="4">Growth cone</location>
    </subcellularLocation>
    <subcellularLocation>
        <location evidence="4">Cytoplasmic vesicle</location>
    </subcellularLocation>
    <subcellularLocation>
        <location evidence="9">Cytoplasm</location>
        <location evidence="9">Cytoskeleton</location>
    </subcellularLocation>
</comment>
<comment type="alternative products">
    <event type="alternative splicing"/>
    <isoform>
        <id>P37285-1</id>
        <name>C</name>
        <sequence type="displayed"/>
    </isoform>
    <isoform>
        <id>P37285-2</id>
        <name>A</name>
        <sequence type="described" ref="VSP_002872"/>
    </isoform>
    <isoform>
        <id>P37285-3</id>
        <name>B</name>
        <sequence type="described" ref="VSP_002871"/>
    </isoform>
    <text>Additional isoforms seem to exist.</text>
</comment>
<comment type="tissue specificity">
    <text evidence="4">Expressed in brain (at protein level).</text>
</comment>
<comment type="PTM">
    <text evidence="2">Phosphorylation at Ser-460 by ERK inhibits interaction with CLSTN1 and localization to cytoplasmic vesicles.</text>
</comment>
<comment type="similarity">
    <text evidence="8">Belongs to the kinesin light chain family.</text>
</comment>
<comment type="caution">
    <text evidence="8">It is uncertain whether Met-1 or Met-5 is the initiator.</text>
</comment>
<reference key="1">
    <citation type="journal article" date="1991" name="Proc. Natl. Acad. Sci. U.S.A.">
        <title>Molecular genetics of kinesin light chains: generation of isoforms by alternative splicing.</title>
        <authorList>
            <person name="Cyr J.L."/>
            <person name="Pfister K.K."/>
            <person name="Bloom G.S."/>
            <person name="Slaughter C.A."/>
            <person name="Brady S.T."/>
        </authorList>
    </citation>
    <scope>NUCLEOTIDE SEQUENCE [MRNA] (ISOFORMS A; B AND C)</scope>
    <source>
        <tissue>Brain</tissue>
    </source>
</reference>
<reference key="2">
    <citation type="journal article" date="2004" name="J. Biol. Chem.">
        <title>The early onset dystonia protein torsinA interacts with kinesin light chain 1.</title>
        <authorList>
            <person name="Kamm C."/>
            <person name="Boston H."/>
            <person name="Hewett J."/>
            <person name="Wilbur J."/>
            <person name="Corey D.P."/>
            <person name="Hanson P.I."/>
            <person name="Ramesh V."/>
            <person name="Breakefield X.O."/>
        </authorList>
    </citation>
    <scope>INTERACTION WITH TOR1A</scope>
    <scope>SUBCELLULAR LOCATION</scope>
    <scope>TISSUE SPECIFICITY</scope>
</reference>
<reference key="3">
    <citation type="journal article" date="2009" name="J. Cell Sci.">
        <title>Cayman ataxia protein caytaxin is transported by kinesin along neurites through binding to kinesin light chains.</title>
        <authorList>
            <person name="Aoyama T."/>
            <person name="Hata S."/>
            <person name="Nakao T."/>
            <person name="Tanigawa Y."/>
            <person name="Oka C."/>
            <person name="Kawaichi M."/>
        </authorList>
    </citation>
    <scope>FUNCTION</scope>
    <scope>INTERACTION WITH ATCAY</scope>
</reference>
<reference key="4">
    <citation type="journal article" date="2012" name="Nat. Commun.">
        <title>Quantitative maps of protein phosphorylation sites across 14 different rat organs and tissues.</title>
        <authorList>
            <person name="Lundby A."/>
            <person name="Secher A."/>
            <person name="Lage K."/>
            <person name="Nordsborg N.B."/>
            <person name="Dmytriyev A."/>
            <person name="Lundby C."/>
            <person name="Olsen J.V."/>
        </authorList>
    </citation>
    <scope>PHOSPHORYLATION [LARGE SCALE ANALYSIS] AT SER-162; SER-521 AND SER-524</scope>
    <scope>IDENTIFICATION BY MASS SPECTROMETRY [LARGE SCALE ANALYSIS]</scope>
</reference>
<reference key="5">
    <citation type="journal article" date="2011" name="J. Neurosci.">
        <title>JIP3 mediates TrkB axonal anterograde transport and enhances BDNF signaling by directly bridging TrkB with kinesin-1.</title>
        <authorList>
            <person name="Huang S.H."/>
            <person name="Duan S."/>
            <person name="Sun T."/>
            <person name="Wang J."/>
            <person name="Zhao L."/>
            <person name="Geng Z."/>
            <person name="Yan J."/>
            <person name="Sun H.J."/>
            <person name="Chen Z.Y."/>
        </authorList>
    </citation>
    <scope>INTERACTION WITH NTRK2 AND MAPK8IP3</scope>
</reference>
<protein>
    <recommendedName>
        <fullName>Kinesin light chain 1</fullName>
        <shortName>KLC 1</shortName>
    </recommendedName>
</protein>